<gene>
    <name evidence="1" type="primary">ispD</name>
    <name type="ordered locus">SSPA2598</name>
</gene>
<reference key="1">
    <citation type="journal article" date="2009" name="BMC Genomics">
        <title>Pseudogene accumulation in the evolutionary histories of Salmonella enterica serovars Paratyphi A and Typhi.</title>
        <authorList>
            <person name="Holt K.E."/>
            <person name="Thomson N.R."/>
            <person name="Wain J."/>
            <person name="Langridge G.C."/>
            <person name="Hasan R."/>
            <person name="Bhutta Z.A."/>
            <person name="Quail M.A."/>
            <person name="Norbertczak H."/>
            <person name="Walker D."/>
            <person name="Simmonds M."/>
            <person name="White B."/>
            <person name="Bason N."/>
            <person name="Mungall K."/>
            <person name="Dougan G."/>
            <person name="Parkhill J."/>
        </authorList>
    </citation>
    <scope>NUCLEOTIDE SEQUENCE [LARGE SCALE GENOMIC DNA]</scope>
    <source>
        <strain>AKU_12601</strain>
    </source>
</reference>
<organism>
    <name type="scientific">Salmonella paratyphi A (strain AKU_12601)</name>
    <dbReference type="NCBI Taxonomy" id="554290"/>
    <lineage>
        <taxon>Bacteria</taxon>
        <taxon>Pseudomonadati</taxon>
        <taxon>Pseudomonadota</taxon>
        <taxon>Gammaproteobacteria</taxon>
        <taxon>Enterobacterales</taxon>
        <taxon>Enterobacteriaceae</taxon>
        <taxon>Salmonella</taxon>
    </lineage>
</organism>
<sequence length="236" mass="25729">MAATLLDVCAVVPAAGFGRRMQTECPKQYLSIGNKTILEHSVHALLAHPRVTRVVIAISPGDHRFAQLPLANHPQITVVDGGNERADSVLAGLQAVAKAQWVLVHDAARPCLHQDDLARLLAISENSRVGGILASPVRDTMKRGEPGKTAIAHTVERADLWHALTPQFFPRELLHDCLTRALNEGAIITDEASALEYCGFHPALVEGRADNIKVTRPEDLALAEFYLTRTIHQEKA</sequence>
<name>ISPD_SALPK</name>
<proteinExistence type="inferred from homology"/>
<feature type="chain" id="PRO_1000094348" description="2-C-methyl-D-erythritol 4-phosphate cytidylyltransferase">
    <location>
        <begin position="1"/>
        <end position="236"/>
    </location>
</feature>
<feature type="site" description="Transition state stabilizer" evidence="1">
    <location>
        <position position="20"/>
    </location>
</feature>
<feature type="site" description="Transition state stabilizer" evidence="1">
    <location>
        <position position="27"/>
    </location>
</feature>
<feature type="site" description="Positions MEP for the nucleophilic attack" evidence="1">
    <location>
        <position position="157"/>
    </location>
</feature>
<feature type="site" description="Positions MEP for the nucleophilic attack" evidence="1">
    <location>
        <position position="213"/>
    </location>
</feature>
<dbReference type="EC" id="2.7.7.60" evidence="1"/>
<dbReference type="EMBL" id="FM200053">
    <property type="protein sequence ID" value="CAR60836.1"/>
    <property type="molecule type" value="Genomic_DNA"/>
</dbReference>
<dbReference type="RefSeq" id="WP_000741651.1">
    <property type="nucleotide sequence ID" value="NC_011147.1"/>
</dbReference>
<dbReference type="SMR" id="B5BEY4"/>
<dbReference type="KEGG" id="sek:SSPA2598"/>
<dbReference type="HOGENOM" id="CLU_061281_3_1_6"/>
<dbReference type="UniPathway" id="UPA00056">
    <property type="reaction ID" value="UER00093"/>
</dbReference>
<dbReference type="Proteomes" id="UP000001869">
    <property type="component" value="Chromosome"/>
</dbReference>
<dbReference type="GO" id="GO:0050518">
    <property type="term" value="F:2-C-methyl-D-erythritol 4-phosphate cytidylyltransferase activity"/>
    <property type="evidence" value="ECO:0007669"/>
    <property type="project" value="UniProtKB-UniRule"/>
</dbReference>
<dbReference type="GO" id="GO:0019288">
    <property type="term" value="P:isopentenyl diphosphate biosynthetic process, methylerythritol 4-phosphate pathway"/>
    <property type="evidence" value="ECO:0007669"/>
    <property type="project" value="UniProtKB-UniRule"/>
</dbReference>
<dbReference type="CDD" id="cd02516">
    <property type="entry name" value="CDP-ME_synthetase"/>
    <property type="match status" value="1"/>
</dbReference>
<dbReference type="FunFam" id="3.90.550.10:FF:000003">
    <property type="entry name" value="2-C-methyl-D-erythritol 4-phosphate cytidylyltransferase"/>
    <property type="match status" value="1"/>
</dbReference>
<dbReference type="Gene3D" id="3.90.550.10">
    <property type="entry name" value="Spore Coat Polysaccharide Biosynthesis Protein SpsA, Chain A"/>
    <property type="match status" value="1"/>
</dbReference>
<dbReference type="HAMAP" id="MF_00108">
    <property type="entry name" value="IspD"/>
    <property type="match status" value="1"/>
</dbReference>
<dbReference type="InterPro" id="IPR001228">
    <property type="entry name" value="IspD"/>
</dbReference>
<dbReference type="InterPro" id="IPR034683">
    <property type="entry name" value="IspD/TarI"/>
</dbReference>
<dbReference type="InterPro" id="IPR050088">
    <property type="entry name" value="IspD/TarI_cytidylyltransf_bact"/>
</dbReference>
<dbReference type="InterPro" id="IPR018294">
    <property type="entry name" value="ISPD_synthase_CS"/>
</dbReference>
<dbReference type="InterPro" id="IPR029044">
    <property type="entry name" value="Nucleotide-diphossugar_trans"/>
</dbReference>
<dbReference type="NCBIfam" id="TIGR00453">
    <property type="entry name" value="ispD"/>
    <property type="match status" value="1"/>
</dbReference>
<dbReference type="PANTHER" id="PTHR32125">
    <property type="entry name" value="2-C-METHYL-D-ERYTHRITOL 4-PHOSPHATE CYTIDYLYLTRANSFERASE, CHLOROPLASTIC"/>
    <property type="match status" value="1"/>
</dbReference>
<dbReference type="PANTHER" id="PTHR32125:SF4">
    <property type="entry name" value="2-C-METHYL-D-ERYTHRITOL 4-PHOSPHATE CYTIDYLYLTRANSFERASE, CHLOROPLASTIC"/>
    <property type="match status" value="1"/>
</dbReference>
<dbReference type="Pfam" id="PF01128">
    <property type="entry name" value="IspD"/>
    <property type="match status" value="1"/>
</dbReference>
<dbReference type="SUPFAM" id="SSF53448">
    <property type="entry name" value="Nucleotide-diphospho-sugar transferases"/>
    <property type="match status" value="1"/>
</dbReference>
<dbReference type="PROSITE" id="PS01295">
    <property type="entry name" value="ISPD"/>
    <property type="match status" value="1"/>
</dbReference>
<accession>B5BEY4</accession>
<comment type="function">
    <text evidence="1">Catalyzes the formation of 4-diphosphocytidyl-2-C-methyl-D-erythritol from CTP and 2-C-methyl-D-erythritol 4-phosphate (MEP).</text>
</comment>
<comment type="catalytic activity">
    <reaction evidence="1">
        <text>2-C-methyl-D-erythritol 4-phosphate + CTP + H(+) = 4-CDP-2-C-methyl-D-erythritol + diphosphate</text>
        <dbReference type="Rhea" id="RHEA:13429"/>
        <dbReference type="ChEBI" id="CHEBI:15378"/>
        <dbReference type="ChEBI" id="CHEBI:33019"/>
        <dbReference type="ChEBI" id="CHEBI:37563"/>
        <dbReference type="ChEBI" id="CHEBI:57823"/>
        <dbReference type="ChEBI" id="CHEBI:58262"/>
        <dbReference type="EC" id="2.7.7.60"/>
    </reaction>
</comment>
<comment type="pathway">
    <text evidence="1">Isoprenoid biosynthesis; isopentenyl diphosphate biosynthesis via DXP pathway; isopentenyl diphosphate from 1-deoxy-D-xylulose 5-phosphate: step 2/6.</text>
</comment>
<comment type="subunit">
    <text evidence="1">Homodimer.</text>
</comment>
<comment type="similarity">
    <text evidence="1">Belongs to the IspD/TarI cytidylyltransferase family. IspD subfamily.</text>
</comment>
<evidence type="ECO:0000255" key="1">
    <source>
        <dbReference type="HAMAP-Rule" id="MF_00108"/>
    </source>
</evidence>
<keyword id="KW-0414">Isoprene biosynthesis</keyword>
<keyword id="KW-0548">Nucleotidyltransferase</keyword>
<keyword id="KW-0808">Transferase</keyword>
<protein>
    <recommendedName>
        <fullName evidence="1">2-C-methyl-D-erythritol 4-phosphate cytidylyltransferase</fullName>
        <ecNumber evidence="1">2.7.7.60</ecNumber>
    </recommendedName>
    <alternativeName>
        <fullName evidence="1">4-diphosphocytidyl-2C-methyl-D-erythritol synthase</fullName>
    </alternativeName>
    <alternativeName>
        <fullName evidence="1">MEP cytidylyltransferase</fullName>
        <shortName evidence="1">MCT</shortName>
    </alternativeName>
</protein>